<evidence type="ECO:0000255" key="1"/>
<evidence type="ECO:0000305" key="2"/>
<sequence>MEYLLQEYLPILVFLGMASALAIVLILAAAVIAVRNPDPEKVSAYECGFNAFDDARMKFDVRFYLVSILFIIFDLEVAFLFPWAVSFASLSDVAFWGLMVFLAVLTVGFAYEWKKGALEWA</sequence>
<gene>
    <name type="primary">nqo7</name>
</gene>
<reference key="1">
    <citation type="journal article" date="1992" name="Biochemistry">
        <title>Gene cluster of the energy-transducing NADH-quinone oxidoreductase of Paracoccus denitrificans: characterization of four structural gene products.</title>
        <authorList>
            <person name="Xu X."/>
            <person name="Matsuno-Yagi A."/>
            <person name="Yagi T."/>
        </authorList>
    </citation>
    <scope>NUCLEOTIDE SEQUENCE [GENOMIC DNA]</scope>
    <source>
        <strain>ATCC 13543 / NRRL B-3784 / NRC 449</strain>
    </source>
</reference>
<dbReference type="EC" id="7.1.1.-"/>
<dbReference type="EMBL" id="M93015">
    <property type="protein sequence ID" value="AAA03035.1"/>
    <property type="molecule type" value="Unassigned_DNA"/>
</dbReference>
<dbReference type="PIR" id="C42573">
    <property type="entry name" value="C42573"/>
</dbReference>
<dbReference type="SMR" id="P29919"/>
<dbReference type="TCDB" id="3.D.1.2.1">
    <property type="family name" value="the h+ or na+-translocating nadh dehydrogenase (ndh) family"/>
</dbReference>
<dbReference type="GO" id="GO:0030964">
    <property type="term" value="C:NADH dehydrogenase complex"/>
    <property type="evidence" value="ECO:0007669"/>
    <property type="project" value="TreeGrafter"/>
</dbReference>
<dbReference type="GO" id="GO:0005886">
    <property type="term" value="C:plasma membrane"/>
    <property type="evidence" value="ECO:0007669"/>
    <property type="project" value="UniProtKB-SubCell"/>
</dbReference>
<dbReference type="GO" id="GO:0008137">
    <property type="term" value="F:NADH dehydrogenase (ubiquinone) activity"/>
    <property type="evidence" value="ECO:0007669"/>
    <property type="project" value="InterPro"/>
</dbReference>
<dbReference type="GO" id="GO:0050136">
    <property type="term" value="F:NADH:ubiquinone reductase (non-electrogenic) activity"/>
    <property type="evidence" value="ECO:0007669"/>
    <property type="project" value="UniProtKB-UniRule"/>
</dbReference>
<dbReference type="GO" id="GO:0048038">
    <property type="term" value="F:quinone binding"/>
    <property type="evidence" value="ECO:0007669"/>
    <property type="project" value="UniProtKB-KW"/>
</dbReference>
<dbReference type="FunFam" id="1.20.58.1610:FF:000004">
    <property type="entry name" value="NADH-quinone oxidoreductase subunit A"/>
    <property type="match status" value="1"/>
</dbReference>
<dbReference type="Gene3D" id="1.20.58.1610">
    <property type="entry name" value="NADH:ubiquinone/plastoquinone oxidoreductase, chain 3"/>
    <property type="match status" value="1"/>
</dbReference>
<dbReference type="HAMAP" id="MF_01394">
    <property type="entry name" value="NDH1_NuoA"/>
    <property type="match status" value="1"/>
</dbReference>
<dbReference type="InterPro" id="IPR023043">
    <property type="entry name" value="NAD(P)H_OxRDtase_bac/plastid"/>
</dbReference>
<dbReference type="InterPro" id="IPR000440">
    <property type="entry name" value="NADH_UbQ/plastoQ_OxRdtase_su3"/>
</dbReference>
<dbReference type="InterPro" id="IPR038430">
    <property type="entry name" value="NDAH_ubi_oxred_su3_sf"/>
</dbReference>
<dbReference type="PANTHER" id="PTHR11058">
    <property type="entry name" value="NADH-UBIQUINONE OXIDOREDUCTASE CHAIN 3"/>
    <property type="match status" value="1"/>
</dbReference>
<dbReference type="PANTHER" id="PTHR11058:SF9">
    <property type="entry name" value="NADH-UBIQUINONE OXIDOREDUCTASE CHAIN 3"/>
    <property type="match status" value="1"/>
</dbReference>
<dbReference type="Pfam" id="PF00507">
    <property type="entry name" value="Oxidored_q4"/>
    <property type="match status" value="1"/>
</dbReference>
<organism>
    <name type="scientific">Paracoccus denitrificans</name>
    <dbReference type="NCBI Taxonomy" id="266"/>
    <lineage>
        <taxon>Bacteria</taxon>
        <taxon>Pseudomonadati</taxon>
        <taxon>Pseudomonadota</taxon>
        <taxon>Alphaproteobacteria</taxon>
        <taxon>Rhodobacterales</taxon>
        <taxon>Paracoccaceae</taxon>
        <taxon>Paracoccus</taxon>
    </lineage>
</organism>
<accession>P29919</accession>
<comment type="function">
    <text>NDH-1 shuttles electrons from NADH, via FMN and iron-sulfur (Fe-S) centers, to quinones in the respiratory chain. The immediate electron acceptor for the enzyme in this species is believed to be ubiquinone. Couples the redox reaction to proton translocation (for every two electrons transferred, four hydrogen ions are translocated across the cytoplasmic membrane), and thus conserves the redox energy in a proton gradient.</text>
</comment>
<comment type="catalytic activity">
    <reaction>
        <text>a quinone + NADH + 5 H(+)(in) = a quinol + NAD(+) + 4 H(+)(out)</text>
        <dbReference type="Rhea" id="RHEA:57888"/>
        <dbReference type="ChEBI" id="CHEBI:15378"/>
        <dbReference type="ChEBI" id="CHEBI:24646"/>
        <dbReference type="ChEBI" id="CHEBI:57540"/>
        <dbReference type="ChEBI" id="CHEBI:57945"/>
        <dbReference type="ChEBI" id="CHEBI:132124"/>
    </reaction>
</comment>
<comment type="subunit">
    <text>NDH-1 is composed of at least 14 different subunits, Nqo1 to Nqo14. The complex has a L-shaped structure, with the hydrophobic arm (subunits Nqo7, Nqo8, Nqo10 to Nqo14) embedded in the inner membrane and the hydrophilic peripheral arm (subunits Nqo1 to Nqo6, Nqo9) protruding into the bacterial cytoplasm. The hydrophilic domain contains all the redox centers.</text>
</comment>
<comment type="subcellular location">
    <subcellularLocation>
        <location>Cell inner membrane</location>
        <topology>Multi-pass membrane protein</topology>
    </subcellularLocation>
</comment>
<comment type="similarity">
    <text evidence="2">Belongs to the complex I subunit 3 family.</text>
</comment>
<keyword id="KW-0997">Cell inner membrane</keyword>
<keyword id="KW-1003">Cell membrane</keyword>
<keyword id="KW-0472">Membrane</keyword>
<keyword id="KW-0520">NAD</keyword>
<keyword id="KW-0874">Quinone</keyword>
<keyword id="KW-1278">Translocase</keyword>
<keyword id="KW-0812">Transmembrane</keyword>
<keyword id="KW-1133">Transmembrane helix</keyword>
<keyword id="KW-0813">Transport</keyword>
<keyword id="KW-0830">Ubiquinone</keyword>
<protein>
    <recommendedName>
        <fullName>NADH-quinone oxidoreductase subunit 7</fullName>
        <ecNumber>7.1.1.-</ecNumber>
    </recommendedName>
    <alternativeName>
        <fullName>NADH dehydrogenase I subunit 7</fullName>
    </alternativeName>
    <alternativeName>
        <fullName>NDH-1 subunit 7</fullName>
    </alternativeName>
</protein>
<feature type="chain" id="PRO_0000117860" description="NADH-quinone oxidoreductase subunit 7">
    <location>
        <begin position="1"/>
        <end position="121"/>
    </location>
</feature>
<feature type="transmembrane region" description="Helical" evidence="1">
    <location>
        <begin position="11"/>
        <end position="31"/>
    </location>
</feature>
<feature type="transmembrane region" description="Helical" evidence="1">
    <location>
        <begin position="65"/>
        <end position="85"/>
    </location>
</feature>
<feature type="transmembrane region" description="Helical" evidence="1">
    <location>
        <begin position="93"/>
        <end position="113"/>
    </location>
</feature>
<name>NQO7_PARDE</name>
<proteinExistence type="inferred from homology"/>